<accession>O34574</accession>
<accession>Q7BVR3</accession>
<sequence>MYNEGVTSPSQLARKKNATDKWHGSSIRKILENPHYTGTLQQCREYRPSVTSKRRRSVNLENQIIIEKSHEPIIPLEDFLIVQEILITRKRRRPQAEVHLFTNTAVCKDCRRSMHFKKNRKGYVCGSYNKHGLKACSDHYVSEIDLTDKVITNLNKIYLKFSKENYFKELSEKALKYKEKIESKIIEINEKLNDKKRDKSNLVISLANGVISKEDYQLAINITNEDISNFETTLHQLSKDLEFQKIEKEIIDFKKSLDKFMKEGTLTPEMLHLLVDEIEVHANGTIEINYRFREPTVPSA</sequence>
<keyword id="KW-0175">Coiled coil</keyword>
<keyword id="KW-0238">DNA-binding</keyword>
<keyword id="KW-1185">Reference proteome</keyword>
<organism>
    <name type="scientific">Bacillus subtilis (strain 168)</name>
    <dbReference type="NCBI Taxonomy" id="224308"/>
    <lineage>
        <taxon>Bacteria</taxon>
        <taxon>Bacillati</taxon>
        <taxon>Bacillota</taxon>
        <taxon>Bacilli</taxon>
        <taxon>Bacillales</taxon>
        <taxon>Bacillaceae</taxon>
        <taxon>Bacillus</taxon>
    </lineage>
</organism>
<dbReference type="EMBL" id="AF012532">
    <property type="protein sequence ID" value="AAB66472.1"/>
    <property type="molecule type" value="Genomic_DNA"/>
</dbReference>
<dbReference type="EMBL" id="AL009126">
    <property type="protein sequence ID" value="CAB12494.1"/>
    <property type="molecule type" value="Genomic_DNA"/>
</dbReference>
<dbReference type="PIR" id="F69793">
    <property type="entry name" value="F69793"/>
</dbReference>
<dbReference type="RefSeq" id="NP_388556.1">
    <property type="nucleotide sequence ID" value="NC_000964.3"/>
</dbReference>
<dbReference type="RefSeq" id="WP_003233891.1">
    <property type="nucleotide sequence ID" value="NZ_OZ025638.1"/>
</dbReference>
<dbReference type="SMR" id="O34574"/>
<dbReference type="FunCoup" id="O34574">
    <property type="interactions" value="46"/>
</dbReference>
<dbReference type="STRING" id="224308.BSU06740"/>
<dbReference type="PaxDb" id="224308-BSU06740"/>
<dbReference type="EnsemblBacteria" id="CAB12494">
    <property type="protein sequence ID" value="CAB12494"/>
    <property type="gene ID" value="BSU_06740"/>
</dbReference>
<dbReference type="GeneID" id="938745"/>
<dbReference type="KEGG" id="bsu:BSU06740"/>
<dbReference type="PATRIC" id="fig|224308.179.peg.732"/>
<dbReference type="eggNOG" id="COG1961">
    <property type="taxonomic scope" value="Bacteria"/>
</dbReference>
<dbReference type="InParanoid" id="O34574"/>
<dbReference type="OrthoDB" id="9811097at2"/>
<dbReference type="BioCyc" id="BSUB:BSU06740-MONOMER"/>
<dbReference type="Proteomes" id="UP000001570">
    <property type="component" value="Chromosome"/>
</dbReference>
<dbReference type="GO" id="GO:0003677">
    <property type="term" value="F:DNA binding"/>
    <property type="evidence" value="ECO:0007669"/>
    <property type="project" value="UniProtKB-KW"/>
</dbReference>
<dbReference type="GO" id="GO:0000150">
    <property type="term" value="F:DNA strand exchange activity"/>
    <property type="evidence" value="ECO:0007669"/>
    <property type="project" value="InterPro"/>
</dbReference>
<dbReference type="Gene3D" id="3.90.1750.20">
    <property type="entry name" value="Putative Large Serine Recombinase, Chain B, Domain 2"/>
    <property type="match status" value="1"/>
</dbReference>
<dbReference type="InterPro" id="IPR038109">
    <property type="entry name" value="DNA_bind_recomb_sf"/>
</dbReference>
<dbReference type="InterPro" id="IPR011109">
    <property type="entry name" value="DNA_bind_recombinase_dom"/>
</dbReference>
<dbReference type="InterPro" id="IPR050639">
    <property type="entry name" value="SSR_resolvase"/>
</dbReference>
<dbReference type="InterPro" id="IPR025827">
    <property type="entry name" value="Zn_ribbon_recom_dom"/>
</dbReference>
<dbReference type="PANTHER" id="PTHR30461">
    <property type="entry name" value="DNA-INVERTASE FROM LAMBDOID PROPHAGE"/>
    <property type="match status" value="1"/>
</dbReference>
<dbReference type="PANTHER" id="PTHR30461:SF19">
    <property type="entry name" value="SITE-SPECIFIC RECOMBINASE RESOLVASE FAMILY"/>
    <property type="match status" value="1"/>
</dbReference>
<dbReference type="Pfam" id="PF07508">
    <property type="entry name" value="Recombinase"/>
    <property type="match status" value="1"/>
</dbReference>
<dbReference type="Pfam" id="PF13408">
    <property type="entry name" value="Zn_ribbon_recom"/>
    <property type="match status" value="1"/>
</dbReference>
<dbReference type="PROSITE" id="PS51737">
    <property type="entry name" value="RECOMBINASE_DNA_BIND"/>
    <property type="match status" value="1"/>
</dbReference>
<gene>
    <name type="primary">yefB</name>
    <name type="ordered locus">BSU06740</name>
</gene>
<feature type="chain" id="PRO_0000360663" description="Uncharacterized protein YefB">
    <location>
        <begin position="1"/>
        <end position="300"/>
    </location>
</feature>
<feature type="DNA-binding region" description="Recombinase" evidence="2">
    <location>
        <begin position="1"/>
        <end position="92"/>
    </location>
</feature>
<feature type="region of interest" description="Disordered" evidence="3">
    <location>
        <begin position="1"/>
        <end position="20"/>
    </location>
</feature>
<feature type="coiled-coil region" evidence="1">
    <location>
        <begin position="162"/>
        <end position="249"/>
    </location>
</feature>
<feature type="compositionally biased region" description="Polar residues" evidence="3">
    <location>
        <begin position="1"/>
        <end position="11"/>
    </location>
</feature>
<evidence type="ECO:0000255" key="1"/>
<evidence type="ECO:0000255" key="2">
    <source>
        <dbReference type="PROSITE-ProRule" id="PRU01073"/>
    </source>
</evidence>
<evidence type="ECO:0000256" key="3">
    <source>
        <dbReference type="SAM" id="MobiDB-lite"/>
    </source>
</evidence>
<proteinExistence type="predicted"/>
<name>YEFB_BACSU</name>
<reference key="1">
    <citation type="submission" date="1997-07" db="EMBL/GenBank/DDBJ databases">
        <title>The 55-58 degree segment of the Bacillus subtilis chromosome, a region spanning from the purA gene cluster to the cotJ operon.</title>
        <authorList>
            <person name="Borriss R."/>
            <person name="Schroeter R."/>
        </authorList>
    </citation>
    <scope>NUCLEOTIDE SEQUENCE [GENOMIC DNA]</scope>
    <source>
        <strain>168</strain>
    </source>
</reference>
<reference key="2">
    <citation type="journal article" date="1997" name="Nature">
        <title>The complete genome sequence of the Gram-positive bacterium Bacillus subtilis.</title>
        <authorList>
            <person name="Kunst F."/>
            <person name="Ogasawara N."/>
            <person name="Moszer I."/>
            <person name="Albertini A.M."/>
            <person name="Alloni G."/>
            <person name="Azevedo V."/>
            <person name="Bertero M.G."/>
            <person name="Bessieres P."/>
            <person name="Bolotin A."/>
            <person name="Borchert S."/>
            <person name="Borriss R."/>
            <person name="Boursier L."/>
            <person name="Brans A."/>
            <person name="Braun M."/>
            <person name="Brignell S.C."/>
            <person name="Bron S."/>
            <person name="Brouillet S."/>
            <person name="Bruschi C.V."/>
            <person name="Caldwell B."/>
            <person name="Capuano V."/>
            <person name="Carter N.M."/>
            <person name="Choi S.-K."/>
            <person name="Codani J.-J."/>
            <person name="Connerton I.F."/>
            <person name="Cummings N.J."/>
            <person name="Daniel R.A."/>
            <person name="Denizot F."/>
            <person name="Devine K.M."/>
            <person name="Duesterhoeft A."/>
            <person name="Ehrlich S.D."/>
            <person name="Emmerson P.T."/>
            <person name="Entian K.-D."/>
            <person name="Errington J."/>
            <person name="Fabret C."/>
            <person name="Ferrari E."/>
            <person name="Foulger D."/>
            <person name="Fritz C."/>
            <person name="Fujita M."/>
            <person name="Fujita Y."/>
            <person name="Fuma S."/>
            <person name="Galizzi A."/>
            <person name="Galleron N."/>
            <person name="Ghim S.-Y."/>
            <person name="Glaser P."/>
            <person name="Goffeau A."/>
            <person name="Golightly E.J."/>
            <person name="Grandi G."/>
            <person name="Guiseppi G."/>
            <person name="Guy B.J."/>
            <person name="Haga K."/>
            <person name="Haiech J."/>
            <person name="Harwood C.R."/>
            <person name="Henaut A."/>
            <person name="Hilbert H."/>
            <person name="Holsappel S."/>
            <person name="Hosono S."/>
            <person name="Hullo M.-F."/>
            <person name="Itaya M."/>
            <person name="Jones L.-M."/>
            <person name="Joris B."/>
            <person name="Karamata D."/>
            <person name="Kasahara Y."/>
            <person name="Klaerr-Blanchard M."/>
            <person name="Klein C."/>
            <person name="Kobayashi Y."/>
            <person name="Koetter P."/>
            <person name="Koningstein G."/>
            <person name="Krogh S."/>
            <person name="Kumano M."/>
            <person name="Kurita K."/>
            <person name="Lapidus A."/>
            <person name="Lardinois S."/>
            <person name="Lauber J."/>
            <person name="Lazarevic V."/>
            <person name="Lee S.-M."/>
            <person name="Levine A."/>
            <person name="Liu H."/>
            <person name="Masuda S."/>
            <person name="Mauel C."/>
            <person name="Medigue C."/>
            <person name="Medina N."/>
            <person name="Mellado R.P."/>
            <person name="Mizuno M."/>
            <person name="Moestl D."/>
            <person name="Nakai S."/>
            <person name="Noback M."/>
            <person name="Noone D."/>
            <person name="O'Reilly M."/>
            <person name="Ogawa K."/>
            <person name="Ogiwara A."/>
            <person name="Oudega B."/>
            <person name="Park S.-H."/>
            <person name="Parro V."/>
            <person name="Pohl T.M."/>
            <person name="Portetelle D."/>
            <person name="Porwollik S."/>
            <person name="Prescott A.M."/>
            <person name="Presecan E."/>
            <person name="Pujic P."/>
            <person name="Purnelle B."/>
            <person name="Rapoport G."/>
            <person name="Rey M."/>
            <person name="Reynolds S."/>
            <person name="Rieger M."/>
            <person name="Rivolta C."/>
            <person name="Rocha E."/>
            <person name="Roche B."/>
            <person name="Rose M."/>
            <person name="Sadaie Y."/>
            <person name="Sato T."/>
            <person name="Scanlan E."/>
            <person name="Schleich S."/>
            <person name="Schroeter R."/>
            <person name="Scoffone F."/>
            <person name="Sekiguchi J."/>
            <person name="Sekowska A."/>
            <person name="Seror S.J."/>
            <person name="Serror P."/>
            <person name="Shin B.-S."/>
            <person name="Soldo B."/>
            <person name="Sorokin A."/>
            <person name="Tacconi E."/>
            <person name="Takagi T."/>
            <person name="Takahashi H."/>
            <person name="Takemaru K."/>
            <person name="Takeuchi M."/>
            <person name="Tamakoshi A."/>
            <person name="Tanaka T."/>
            <person name="Terpstra P."/>
            <person name="Tognoni A."/>
            <person name="Tosato V."/>
            <person name="Uchiyama S."/>
            <person name="Vandenbol M."/>
            <person name="Vannier F."/>
            <person name="Vassarotti A."/>
            <person name="Viari A."/>
            <person name="Wambutt R."/>
            <person name="Wedler E."/>
            <person name="Wedler H."/>
            <person name="Weitzenegger T."/>
            <person name="Winters P."/>
            <person name="Wipat A."/>
            <person name="Yamamoto H."/>
            <person name="Yamane K."/>
            <person name="Yasumoto K."/>
            <person name="Yata K."/>
            <person name="Yoshida K."/>
            <person name="Yoshikawa H.-F."/>
            <person name="Zumstein E."/>
            <person name="Yoshikawa H."/>
            <person name="Danchin A."/>
        </authorList>
    </citation>
    <scope>NUCLEOTIDE SEQUENCE [LARGE SCALE GENOMIC DNA]</scope>
    <source>
        <strain>168</strain>
    </source>
</reference>
<protein>
    <recommendedName>
        <fullName>Uncharacterized protein YefB</fullName>
    </recommendedName>
</protein>